<comment type="function">
    <text evidence="1">Involved in peptide bond synthesis. Stimulates efficient translation and peptide-bond synthesis on native or reconstituted 70S ribosomes in vitro. Probably functions indirectly by altering the affinity of the ribosome for aminoacyl-tRNA, thus increasing their reactivity as acceptors for peptidyl transferase.</text>
</comment>
<comment type="pathway">
    <text evidence="1">Protein biosynthesis; polypeptide chain elongation.</text>
</comment>
<comment type="subcellular location">
    <subcellularLocation>
        <location evidence="1">Cytoplasm</location>
    </subcellularLocation>
</comment>
<comment type="similarity">
    <text evidence="1">Belongs to the elongation factor P family.</text>
</comment>
<feature type="chain" id="PRO_1000122995" description="Elongation factor P">
    <location>
        <begin position="1"/>
        <end position="185"/>
    </location>
</feature>
<dbReference type="EMBL" id="AP008955">
    <property type="protein sequence ID" value="BAH43290.1"/>
    <property type="molecule type" value="Genomic_DNA"/>
</dbReference>
<dbReference type="RefSeq" id="WP_012686011.1">
    <property type="nucleotide sequence ID" value="NC_012491.1"/>
</dbReference>
<dbReference type="SMR" id="C0ZBY1"/>
<dbReference type="STRING" id="358681.BBR47_23130"/>
<dbReference type="KEGG" id="bbe:BBR47_23130"/>
<dbReference type="eggNOG" id="COG0231">
    <property type="taxonomic scope" value="Bacteria"/>
</dbReference>
<dbReference type="HOGENOM" id="CLU_074944_0_1_9"/>
<dbReference type="UniPathway" id="UPA00345"/>
<dbReference type="Proteomes" id="UP000001877">
    <property type="component" value="Chromosome"/>
</dbReference>
<dbReference type="GO" id="GO:0005737">
    <property type="term" value="C:cytoplasm"/>
    <property type="evidence" value="ECO:0007669"/>
    <property type="project" value="UniProtKB-SubCell"/>
</dbReference>
<dbReference type="GO" id="GO:0003746">
    <property type="term" value="F:translation elongation factor activity"/>
    <property type="evidence" value="ECO:0007669"/>
    <property type="project" value="UniProtKB-UniRule"/>
</dbReference>
<dbReference type="GO" id="GO:0043043">
    <property type="term" value="P:peptide biosynthetic process"/>
    <property type="evidence" value="ECO:0007669"/>
    <property type="project" value="InterPro"/>
</dbReference>
<dbReference type="CDD" id="cd04470">
    <property type="entry name" value="S1_EF-P_repeat_1"/>
    <property type="match status" value="1"/>
</dbReference>
<dbReference type="CDD" id="cd05794">
    <property type="entry name" value="S1_EF-P_repeat_2"/>
    <property type="match status" value="1"/>
</dbReference>
<dbReference type="FunFam" id="2.30.30.30:FF:000003">
    <property type="entry name" value="Elongation factor P"/>
    <property type="match status" value="1"/>
</dbReference>
<dbReference type="FunFam" id="2.40.50.140:FF:000004">
    <property type="entry name" value="Elongation factor P"/>
    <property type="match status" value="1"/>
</dbReference>
<dbReference type="FunFam" id="2.40.50.140:FF:000009">
    <property type="entry name" value="Elongation factor P"/>
    <property type="match status" value="1"/>
</dbReference>
<dbReference type="Gene3D" id="2.30.30.30">
    <property type="match status" value="1"/>
</dbReference>
<dbReference type="Gene3D" id="2.40.50.140">
    <property type="entry name" value="Nucleic acid-binding proteins"/>
    <property type="match status" value="2"/>
</dbReference>
<dbReference type="HAMAP" id="MF_00141">
    <property type="entry name" value="EF_P"/>
    <property type="match status" value="1"/>
</dbReference>
<dbReference type="InterPro" id="IPR015365">
    <property type="entry name" value="Elong-fact-P_C"/>
</dbReference>
<dbReference type="InterPro" id="IPR012340">
    <property type="entry name" value="NA-bd_OB-fold"/>
</dbReference>
<dbReference type="InterPro" id="IPR014722">
    <property type="entry name" value="Rib_uL2_dom2"/>
</dbReference>
<dbReference type="InterPro" id="IPR020599">
    <property type="entry name" value="Transl_elong_fac_P/YeiP"/>
</dbReference>
<dbReference type="InterPro" id="IPR013185">
    <property type="entry name" value="Transl_elong_KOW-like"/>
</dbReference>
<dbReference type="InterPro" id="IPR001059">
    <property type="entry name" value="Transl_elong_P/YeiP_cen"/>
</dbReference>
<dbReference type="InterPro" id="IPR013852">
    <property type="entry name" value="Transl_elong_P/YeiP_CS"/>
</dbReference>
<dbReference type="InterPro" id="IPR011768">
    <property type="entry name" value="Transl_elongation_fac_P"/>
</dbReference>
<dbReference type="InterPro" id="IPR008991">
    <property type="entry name" value="Translation_prot_SH3-like_sf"/>
</dbReference>
<dbReference type="NCBIfam" id="TIGR00038">
    <property type="entry name" value="efp"/>
    <property type="match status" value="1"/>
</dbReference>
<dbReference type="NCBIfam" id="NF001810">
    <property type="entry name" value="PRK00529.1"/>
    <property type="match status" value="1"/>
</dbReference>
<dbReference type="PANTHER" id="PTHR30053">
    <property type="entry name" value="ELONGATION FACTOR P"/>
    <property type="match status" value="1"/>
</dbReference>
<dbReference type="PANTHER" id="PTHR30053:SF12">
    <property type="entry name" value="ELONGATION FACTOR P (EF-P) FAMILY PROTEIN"/>
    <property type="match status" value="1"/>
</dbReference>
<dbReference type="Pfam" id="PF01132">
    <property type="entry name" value="EFP"/>
    <property type="match status" value="1"/>
</dbReference>
<dbReference type="Pfam" id="PF08207">
    <property type="entry name" value="EFP_N"/>
    <property type="match status" value="1"/>
</dbReference>
<dbReference type="Pfam" id="PF09285">
    <property type="entry name" value="Elong-fact-P_C"/>
    <property type="match status" value="1"/>
</dbReference>
<dbReference type="PIRSF" id="PIRSF005901">
    <property type="entry name" value="EF-P"/>
    <property type="match status" value="1"/>
</dbReference>
<dbReference type="SMART" id="SM01185">
    <property type="entry name" value="EFP"/>
    <property type="match status" value="1"/>
</dbReference>
<dbReference type="SMART" id="SM00841">
    <property type="entry name" value="Elong-fact-P_C"/>
    <property type="match status" value="1"/>
</dbReference>
<dbReference type="SUPFAM" id="SSF50249">
    <property type="entry name" value="Nucleic acid-binding proteins"/>
    <property type="match status" value="2"/>
</dbReference>
<dbReference type="SUPFAM" id="SSF50104">
    <property type="entry name" value="Translation proteins SH3-like domain"/>
    <property type="match status" value="1"/>
</dbReference>
<dbReference type="PROSITE" id="PS01275">
    <property type="entry name" value="EFP"/>
    <property type="match status" value="1"/>
</dbReference>
<keyword id="KW-0963">Cytoplasm</keyword>
<keyword id="KW-0251">Elongation factor</keyword>
<keyword id="KW-0648">Protein biosynthesis</keyword>
<keyword id="KW-1185">Reference proteome</keyword>
<proteinExistence type="inferred from homology"/>
<protein>
    <recommendedName>
        <fullName evidence="1">Elongation factor P</fullName>
        <shortName evidence="1">EF-P</shortName>
    </recommendedName>
</protein>
<organism>
    <name type="scientific">Brevibacillus brevis (strain 47 / JCM 6285 / NBRC 100599)</name>
    <dbReference type="NCBI Taxonomy" id="358681"/>
    <lineage>
        <taxon>Bacteria</taxon>
        <taxon>Bacillati</taxon>
        <taxon>Bacillota</taxon>
        <taxon>Bacilli</taxon>
        <taxon>Bacillales</taxon>
        <taxon>Paenibacillaceae</taxon>
        <taxon>Brevibacillus</taxon>
    </lineage>
</organism>
<evidence type="ECO:0000255" key="1">
    <source>
        <dbReference type="HAMAP-Rule" id="MF_00141"/>
    </source>
</evidence>
<accession>C0ZBY1</accession>
<sequence>MISVNDFRTGLTIEVDGNIFTVLEFQHVKPGKGAAFVRSKLRNLRSGNTTEMTFRGGEKVNPARIESSTMQYLYASGDEYTFMNTETYEQMTFTRNQIERELRFLKENMNVQIMQYNGETIGIQLPNTVELVVTECEPGVKGDTASNVTKKATLETGFVVNVPLFVEEGERLIIDTRTEAYVSRA</sequence>
<gene>
    <name evidence="1" type="primary">efp</name>
    <name type="ordered locus">BBR47_23130</name>
</gene>
<name>EFP_BREBN</name>
<reference key="1">
    <citation type="submission" date="2005-03" db="EMBL/GenBank/DDBJ databases">
        <title>Brevibacillus brevis strain 47, complete genome.</title>
        <authorList>
            <person name="Hosoyama A."/>
            <person name="Yamada R."/>
            <person name="Hongo Y."/>
            <person name="Terui Y."/>
            <person name="Ankai A."/>
            <person name="Masuyama W."/>
            <person name="Sekiguchi M."/>
            <person name="Takeda T."/>
            <person name="Asano K."/>
            <person name="Ohji S."/>
            <person name="Ichikawa N."/>
            <person name="Narita S."/>
            <person name="Aoki N."/>
            <person name="Miura H."/>
            <person name="Matsushita S."/>
            <person name="Sekigawa T."/>
            <person name="Yamagata H."/>
            <person name="Yoshikawa H."/>
            <person name="Udaka S."/>
            <person name="Tanikawa S."/>
            <person name="Fujita N."/>
        </authorList>
    </citation>
    <scope>NUCLEOTIDE SEQUENCE [LARGE SCALE GENOMIC DNA]</scope>
    <source>
        <strain>47 / JCM 6285 / NBRC 100599</strain>
    </source>
</reference>